<keyword id="KW-1185">Reference proteome</keyword>
<keyword id="KW-0687">Ribonucleoprotein</keyword>
<keyword id="KW-0689">Ribosomal protein</keyword>
<keyword id="KW-0694">RNA-binding</keyword>
<keyword id="KW-0699">rRNA-binding</keyword>
<name>RS5_SHEB5</name>
<evidence type="ECO:0000255" key="1">
    <source>
        <dbReference type="HAMAP-Rule" id="MF_01307"/>
    </source>
</evidence>
<evidence type="ECO:0000305" key="2"/>
<accession>A3DA55</accession>
<organism>
    <name type="scientific">Shewanella baltica (strain OS155 / ATCC BAA-1091)</name>
    <dbReference type="NCBI Taxonomy" id="325240"/>
    <lineage>
        <taxon>Bacteria</taxon>
        <taxon>Pseudomonadati</taxon>
        <taxon>Pseudomonadota</taxon>
        <taxon>Gammaproteobacteria</taxon>
        <taxon>Alteromonadales</taxon>
        <taxon>Shewanellaceae</taxon>
        <taxon>Shewanella</taxon>
    </lineage>
</organism>
<gene>
    <name evidence="1" type="primary">rpsE</name>
    <name type="ordered locus">Sbal_4153</name>
</gene>
<feature type="chain" id="PRO_0000323193" description="Small ribosomal subunit protein uS5">
    <location>
        <begin position="1"/>
        <end position="167"/>
    </location>
</feature>
<feature type="domain" description="S5 DRBM" evidence="1">
    <location>
        <begin position="12"/>
        <end position="75"/>
    </location>
</feature>
<reference key="1">
    <citation type="submission" date="2007-02" db="EMBL/GenBank/DDBJ databases">
        <title>Complete sequence of chromosome of Shewanella baltica OS155.</title>
        <authorList>
            <consortium name="US DOE Joint Genome Institute"/>
            <person name="Copeland A."/>
            <person name="Lucas S."/>
            <person name="Lapidus A."/>
            <person name="Barry K."/>
            <person name="Detter J.C."/>
            <person name="Glavina del Rio T."/>
            <person name="Hammon N."/>
            <person name="Israni S."/>
            <person name="Dalin E."/>
            <person name="Tice H."/>
            <person name="Pitluck S."/>
            <person name="Sims D.R."/>
            <person name="Brettin T."/>
            <person name="Bruce D."/>
            <person name="Han C."/>
            <person name="Tapia R."/>
            <person name="Brainard J."/>
            <person name="Schmutz J."/>
            <person name="Larimer F."/>
            <person name="Land M."/>
            <person name="Hauser L."/>
            <person name="Kyrpides N."/>
            <person name="Mikhailova N."/>
            <person name="Brettar I."/>
            <person name="Klappenbach J."/>
            <person name="Konstantinidis K."/>
            <person name="Rodrigues J."/>
            <person name="Tiedje J."/>
            <person name="Richardson P."/>
        </authorList>
    </citation>
    <scope>NUCLEOTIDE SEQUENCE [LARGE SCALE GENOMIC DNA]</scope>
    <source>
        <strain>OS155 / ATCC BAA-1091</strain>
    </source>
</reference>
<comment type="function">
    <text evidence="1">With S4 and S12 plays an important role in translational accuracy.</text>
</comment>
<comment type="function">
    <text evidence="1">Located at the back of the 30S subunit body where it stabilizes the conformation of the head with respect to the body.</text>
</comment>
<comment type="subunit">
    <text evidence="1">Part of the 30S ribosomal subunit. Contacts proteins S4 and S8.</text>
</comment>
<comment type="domain">
    <text>The N-terminal domain interacts with the head of the 30S subunit; the C-terminal domain interacts with the body and contacts protein S4. The interaction surface between S4 and S5 is involved in control of translational fidelity.</text>
</comment>
<comment type="similarity">
    <text evidence="1">Belongs to the universal ribosomal protein uS5 family.</text>
</comment>
<protein>
    <recommendedName>
        <fullName evidence="1">Small ribosomal subunit protein uS5</fullName>
    </recommendedName>
    <alternativeName>
        <fullName evidence="2">30S ribosomal protein S5</fullName>
    </alternativeName>
</protein>
<dbReference type="EMBL" id="CP000563">
    <property type="protein sequence ID" value="ABN63618.1"/>
    <property type="molecule type" value="Genomic_DNA"/>
</dbReference>
<dbReference type="RefSeq" id="WP_006083583.1">
    <property type="nucleotide sequence ID" value="NC_009052.1"/>
</dbReference>
<dbReference type="SMR" id="A3DA55"/>
<dbReference type="STRING" id="325240.Sbal_4153"/>
<dbReference type="GeneID" id="11770573"/>
<dbReference type="KEGG" id="sbl:Sbal_4153"/>
<dbReference type="HOGENOM" id="CLU_065898_2_2_6"/>
<dbReference type="OrthoDB" id="9809045at2"/>
<dbReference type="Proteomes" id="UP000001557">
    <property type="component" value="Chromosome"/>
</dbReference>
<dbReference type="GO" id="GO:0015935">
    <property type="term" value="C:small ribosomal subunit"/>
    <property type="evidence" value="ECO:0007669"/>
    <property type="project" value="InterPro"/>
</dbReference>
<dbReference type="GO" id="GO:0019843">
    <property type="term" value="F:rRNA binding"/>
    <property type="evidence" value="ECO:0007669"/>
    <property type="project" value="UniProtKB-UniRule"/>
</dbReference>
<dbReference type="GO" id="GO:0003735">
    <property type="term" value="F:structural constituent of ribosome"/>
    <property type="evidence" value="ECO:0007669"/>
    <property type="project" value="InterPro"/>
</dbReference>
<dbReference type="GO" id="GO:0006412">
    <property type="term" value="P:translation"/>
    <property type="evidence" value="ECO:0007669"/>
    <property type="project" value="UniProtKB-UniRule"/>
</dbReference>
<dbReference type="FunFam" id="3.30.160.20:FF:000001">
    <property type="entry name" value="30S ribosomal protein S5"/>
    <property type="match status" value="1"/>
</dbReference>
<dbReference type="FunFam" id="3.30.230.10:FF:000002">
    <property type="entry name" value="30S ribosomal protein S5"/>
    <property type="match status" value="1"/>
</dbReference>
<dbReference type="Gene3D" id="3.30.160.20">
    <property type="match status" value="1"/>
</dbReference>
<dbReference type="Gene3D" id="3.30.230.10">
    <property type="match status" value="1"/>
</dbReference>
<dbReference type="HAMAP" id="MF_01307_B">
    <property type="entry name" value="Ribosomal_uS5_B"/>
    <property type="match status" value="1"/>
</dbReference>
<dbReference type="InterPro" id="IPR020568">
    <property type="entry name" value="Ribosomal_Su5_D2-typ_SF"/>
</dbReference>
<dbReference type="InterPro" id="IPR000851">
    <property type="entry name" value="Ribosomal_uS5"/>
</dbReference>
<dbReference type="InterPro" id="IPR005712">
    <property type="entry name" value="Ribosomal_uS5_bac-type"/>
</dbReference>
<dbReference type="InterPro" id="IPR005324">
    <property type="entry name" value="Ribosomal_uS5_C"/>
</dbReference>
<dbReference type="InterPro" id="IPR013810">
    <property type="entry name" value="Ribosomal_uS5_N"/>
</dbReference>
<dbReference type="InterPro" id="IPR018192">
    <property type="entry name" value="Ribosomal_uS5_N_CS"/>
</dbReference>
<dbReference type="InterPro" id="IPR014721">
    <property type="entry name" value="Ribsml_uS5_D2-typ_fold_subgr"/>
</dbReference>
<dbReference type="NCBIfam" id="TIGR01021">
    <property type="entry name" value="rpsE_bact"/>
    <property type="match status" value="1"/>
</dbReference>
<dbReference type="PANTHER" id="PTHR48277">
    <property type="entry name" value="MITOCHONDRIAL RIBOSOMAL PROTEIN S5"/>
    <property type="match status" value="1"/>
</dbReference>
<dbReference type="PANTHER" id="PTHR48277:SF1">
    <property type="entry name" value="MITOCHONDRIAL RIBOSOMAL PROTEIN S5"/>
    <property type="match status" value="1"/>
</dbReference>
<dbReference type="Pfam" id="PF00333">
    <property type="entry name" value="Ribosomal_S5"/>
    <property type="match status" value="1"/>
</dbReference>
<dbReference type="Pfam" id="PF03719">
    <property type="entry name" value="Ribosomal_S5_C"/>
    <property type="match status" value="1"/>
</dbReference>
<dbReference type="SUPFAM" id="SSF54768">
    <property type="entry name" value="dsRNA-binding domain-like"/>
    <property type="match status" value="1"/>
</dbReference>
<dbReference type="SUPFAM" id="SSF54211">
    <property type="entry name" value="Ribosomal protein S5 domain 2-like"/>
    <property type="match status" value="1"/>
</dbReference>
<dbReference type="PROSITE" id="PS00585">
    <property type="entry name" value="RIBOSOMAL_S5"/>
    <property type="match status" value="1"/>
</dbReference>
<dbReference type="PROSITE" id="PS50881">
    <property type="entry name" value="S5_DSRBD"/>
    <property type="match status" value="1"/>
</dbReference>
<proteinExistence type="inferred from homology"/>
<sequence length="167" mass="17694">MAKLEAQQKDDLQEKLIAVNRVSKVVKGGRIFSFTALTVVGDGNGKIGYGYGKAREVPAAIQKAMEKARRNIVTVELNAGTLHHPVKGRHTGSLVYMQPASQGTGIIAGGAMRAVLEVAGVHNVLSKAYGSTNPINIVRATVDALVHMKSPSQIAAKRGLNVDEIRG</sequence>